<name>Y365_METJA</name>
<sequence length="176" mass="20784">MAKAIIDIETTGLNPMEHRIVAIGVKLGDRDIILMDESEYYLLVNFWDTVEKEGIEKIIGFNIDFDWQFLKLRSLYHRLKIKHFRKYQGRVDLRQILNGSGGQYRKGTKLVDYCRFLGIDVPEDDANGSEIPELWEKFEEEGDEEAKRKICEHLKRDLERTWELYKILVDCGLIEE</sequence>
<accession>Q57811</accession>
<dbReference type="EMBL" id="L77117">
    <property type="protein sequence ID" value="AAB98356.1"/>
    <property type="molecule type" value="Genomic_DNA"/>
</dbReference>
<dbReference type="PIR" id="E64345">
    <property type="entry name" value="E64345"/>
</dbReference>
<dbReference type="RefSeq" id="WP_010869864.1">
    <property type="nucleotide sequence ID" value="NC_000909.1"/>
</dbReference>
<dbReference type="SMR" id="Q57811"/>
<dbReference type="STRING" id="243232.MJ_0365"/>
<dbReference type="PaxDb" id="243232-MJ_0365"/>
<dbReference type="EnsemblBacteria" id="AAB98356">
    <property type="protein sequence ID" value="AAB98356"/>
    <property type="gene ID" value="MJ_0365"/>
</dbReference>
<dbReference type="GeneID" id="1451222"/>
<dbReference type="KEGG" id="mja:MJ_0365"/>
<dbReference type="eggNOG" id="arCOG03130">
    <property type="taxonomic scope" value="Archaea"/>
</dbReference>
<dbReference type="HOGENOM" id="CLU_1521869_0_0_2"/>
<dbReference type="InParanoid" id="Q57811"/>
<dbReference type="OrthoDB" id="372862at2157"/>
<dbReference type="Proteomes" id="UP000000805">
    <property type="component" value="Chromosome"/>
</dbReference>
<dbReference type="GO" id="GO:0003676">
    <property type="term" value="F:nucleic acid binding"/>
    <property type="evidence" value="ECO:0007669"/>
    <property type="project" value="InterPro"/>
</dbReference>
<dbReference type="Gene3D" id="3.30.420.10">
    <property type="entry name" value="Ribonuclease H-like superfamily/Ribonuclease H"/>
    <property type="match status" value="2"/>
</dbReference>
<dbReference type="InterPro" id="IPR012337">
    <property type="entry name" value="RNaseH-like_sf"/>
</dbReference>
<dbReference type="InterPro" id="IPR036397">
    <property type="entry name" value="RNaseH_sf"/>
</dbReference>
<dbReference type="InterPro" id="IPR038720">
    <property type="entry name" value="YprB_RNase_H-like_dom"/>
</dbReference>
<dbReference type="PANTHER" id="PTHR38462">
    <property type="entry name" value="EXONUCLEASE-LIKE PROTEIN"/>
    <property type="match status" value="1"/>
</dbReference>
<dbReference type="PANTHER" id="PTHR38462:SF1">
    <property type="entry name" value="YPRB RIBONUCLEASE H-LIKE DOMAIN-CONTAINING PROTEIN"/>
    <property type="match status" value="1"/>
</dbReference>
<dbReference type="Pfam" id="PF13482">
    <property type="entry name" value="RNase_H_2"/>
    <property type="match status" value="1"/>
</dbReference>
<dbReference type="SUPFAM" id="SSF53098">
    <property type="entry name" value="Ribonuclease H-like"/>
    <property type="match status" value="1"/>
</dbReference>
<gene>
    <name type="ordered locus">MJ0365</name>
</gene>
<feature type="chain" id="PRO_0000106834" description="Uncharacterized protein MJ0365">
    <location>
        <begin position="1"/>
        <end position="176"/>
    </location>
</feature>
<proteinExistence type="predicted"/>
<protein>
    <recommendedName>
        <fullName>Uncharacterized protein MJ0365</fullName>
    </recommendedName>
</protein>
<organism>
    <name type="scientific">Methanocaldococcus jannaschii (strain ATCC 43067 / DSM 2661 / JAL-1 / JCM 10045 / NBRC 100440)</name>
    <name type="common">Methanococcus jannaschii</name>
    <dbReference type="NCBI Taxonomy" id="243232"/>
    <lineage>
        <taxon>Archaea</taxon>
        <taxon>Methanobacteriati</taxon>
        <taxon>Methanobacteriota</taxon>
        <taxon>Methanomada group</taxon>
        <taxon>Methanococci</taxon>
        <taxon>Methanococcales</taxon>
        <taxon>Methanocaldococcaceae</taxon>
        <taxon>Methanocaldococcus</taxon>
    </lineage>
</organism>
<reference key="1">
    <citation type="journal article" date="1996" name="Science">
        <title>Complete genome sequence of the methanogenic archaeon, Methanococcus jannaschii.</title>
        <authorList>
            <person name="Bult C.J."/>
            <person name="White O."/>
            <person name="Olsen G.J."/>
            <person name="Zhou L."/>
            <person name="Fleischmann R.D."/>
            <person name="Sutton G.G."/>
            <person name="Blake J.A."/>
            <person name="FitzGerald L.M."/>
            <person name="Clayton R.A."/>
            <person name="Gocayne J.D."/>
            <person name="Kerlavage A.R."/>
            <person name="Dougherty B.A."/>
            <person name="Tomb J.-F."/>
            <person name="Adams M.D."/>
            <person name="Reich C.I."/>
            <person name="Overbeek R."/>
            <person name="Kirkness E.F."/>
            <person name="Weinstock K.G."/>
            <person name="Merrick J.M."/>
            <person name="Glodek A."/>
            <person name="Scott J.L."/>
            <person name="Geoghagen N.S.M."/>
            <person name="Weidman J.F."/>
            <person name="Fuhrmann J.L."/>
            <person name="Nguyen D."/>
            <person name="Utterback T.R."/>
            <person name="Kelley J.M."/>
            <person name="Peterson J.D."/>
            <person name="Sadow P.W."/>
            <person name="Hanna M.C."/>
            <person name="Cotton M.D."/>
            <person name="Roberts K.M."/>
            <person name="Hurst M.A."/>
            <person name="Kaine B.P."/>
            <person name="Borodovsky M."/>
            <person name="Klenk H.-P."/>
            <person name="Fraser C.M."/>
            <person name="Smith H.O."/>
            <person name="Woese C.R."/>
            <person name="Venter J.C."/>
        </authorList>
    </citation>
    <scope>NUCLEOTIDE SEQUENCE [LARGE SCALE GENOMIC DNA]</scope>
    <source>
        <strain>ATCC 43067 / DSM 2661 / JAL-1 / JCM 10045 / NBRC 100440</strain>
    </source>
</reference>
<keyword id="KW-1185">Reference proteome</keyword>